<evidence type="ECO:0000250" key="1"/>
<evidence type="ECO:0000255" key="2"/>
<evidence type="ECO:0000305" key="3"/>
<name>ATPF2_RHIJ3</name>
<proteinExistence type="inferred from homology"/>
<sequence>MFFVTPAYAEEAPAAATGTDAHAAPAAGEVHTETGVAEGGHARGPFPPFDSTTYASQLLWLVITFGVFYLLMQKVIAPRIGAILDQRHTRLSQDVEEAGRLKAEADAAVRTYEGELAAARAKSNAIGSAARDAAKAKAEQDRRAVEATLSEKIKAAEVRIGEIKAKAFADVGAIAEETAAAVIDQLIGGTVAKADVAAAVAAAKKEV</sequence>
<feature type="chain" id="PRO_0000369034" description="ATP synthase subunit b 2">
    <location>
        <begin position="1"/>
        <end position="207"/>
    </location>
</feature>
<feature type="transmembrane region" description="Helical" evidence="2">
    <location>
        <begin position="58"/>
        <end position="78"/>
    </location>
</feature>
<organism>
    <name type="scientific">Rhizobium johnstonii (strain DSM 114642 / LMG 32736 / 3841)</name>
    <name type="common">Rhizobium leguminosarum bv. viciae</name>
    <dbReference type="NCBI Taxonomy" id="216596"/>
    <lineage>
        <taxon>Bacteria</taxon>
        <taxon>Pseudomonadati</taxon>
        <taxon>Pseudomonadota</taxon>
        <taxon>Alphaproteobacteria</taxon>
        <taxon>Hyphomicrobiales</taxon>
        <taxon>Rhizobiaceae</taxon>
        <taxon>Rhizobium/Agrobacterium group</taxon>
        <taxon>Rhizobium</taxon>
        <taxon>Rhizobium johnstonii</taxon>
    </lineage>
</organism>
<accession>Q1MKT0</accession>
<protein>
    <recommendedName>
        <fullName>ATP synthase subunit b 2</fullName>
    </recommendedName>
    <alternativeName>
        <fullName>ATP synthase F(0) sector subunit b 2</fullName>
    </alternativeName>
    <alternativeName>
        <fullName>ATPase subunit I 2</fullName>
    </alternativeName>
    <alternativeName>
        <fullName>F-type ATPase subunit b 2</fullName>
        <shortName>F-ATPase subunit b 2</shortName>
    </alternativeName>
</protein>
<keyword id="KW-0066">ATP synthesis</keyword>
<keyword id="KW-0997">Cell inner membrane</keyword>
<keyword id="KW-1003">Cell membrane</keyword>
<keyword id="KW-0138">CF(0)</keyword>
<keyword id="KW-0375">Hydrogen ion transport</keyword>
<keyword id="KW-0406">Ion transport</keyword>
<keyword id="KW-0472">Membrane</keyword>
<keyword id="KW-0812">Transmembrane</keyword>
<keyword id="KW-1133">Transmembrane helix</keyword>
<keyword id="KW-0813">Transport</keyword>
<dbReference type="EMBL" id="AM236080">
    <property type="protein sequence ID" value="CAK06424.1"/>
    <property type="molecule type" value="Genomic_DNA"/>
</dbReference>
<dbReference type="RefSeq" id="WP_011650668.1">
    <property type="nucleotide sequence ID" value="NC_008380.1"/>
</dbReference>
<dbReference type="SMR" id="Q1MKT0"/>
<dbReference type="EnsemblBacteria" id="CAK06424">
    <property type="protein sequence ID" value="CAK06424"/>
    <property type="gene ID" value="RL0927"/>
</dbReference>
<dbReference type="KEGG" id="rle:RL0927"/>
<dbReference type="eggNOG" id="COG0711">
    <property type="taxonomic scope" value="Bacteria"/>
</dbReference>
<dbReference type="HOGENOM" id="CLU_079215_1_2_5"/>
<dbReference type="Proteomes" id="UP000006575">
    <property type="component" value="Chromosome"/>
</dbReference>
<dbReference type="GO" id="GO:0005886">
    <property type="term" value="C:plasma membrane"/>
    <property type="evidence" value="ECO:0007669"/>
    <property type="project" value="UniProtKB-SubCell"/>
</dbReference>
<dbReference type="GO" id="GO:0045259">
    <property type="term" value="C:proton-transporting ATP synthase complex"/>
    <property type="evidence" value="ECO:0007669"/>
    <property type="project" value="UniProtKB-KW"/>
</dbReference>
<dbReference type="GO" id="GO:0046933">
    <property type="term" value="F:proton-transporting ATP synthase activity, rotational mechanism"/>
    <property type="evidence" value="ECO:0007669"/>
    <property type="project" value="UniProtKB-UniRule"/>
</dbReference>
<dbReference type="CDD" id="cd06503">
    <property type="entry name" value="ATP-synt_Fo_b"/>
    <property type="match status" value="1"/>
</dbReference>
<dbReference type="HAMAP" id="MF_01398">
    <property type="entry name" value="ATP_synth_b_bprime"/>
    <property type="match status" value="1"/>
</dbReference>
<dbReference type="InterPro" id="IPR002146">
    <property type="entry name" value="ATP_synth_b/b'su_bac/chlpt"/>
</dbReference>
<dbReference type="NCBIfam" id="NF006612">
    <property type="entry name" value="PRK09174.1"/>
    <property type="match status" value="1"/>
</dbReference>
<dbReference type="Pfam" id="PF00430">
    <property type="entry name" value="ATP-synt_B"/>
    <property type="match status" value="1"/>
</dbReference>
<reference key="1">
    <citation type="journal article" date="2006" name="Genome Biol.">
        <title>The genome of Rhizobium leguminosarum has recognizable core and accessory components.</title>
        <authorList>
            <person name="Young J.P.W."/>
            <person name="Crossman L.C."/>
            <person name="Johnston A.W.B."/>
            <person name="Thomson N.R."/>
            <person name="Ghazoui Z.F."/>
            <person name="Hull K.H."/>
            <person name="Wexler M."/>
            <person name="Curson A.R.J."/>
            <person name="Todd J.D."/>
            <person name="Poole P.S."/>
            <person name="Mauchline T.H."/>
            <person name="East A.K."/>
            <person name="Quail M.A."/>
            <person name="Churcher C."/>
            <person name="Arrowsmith C."/>
            <person name="Cherevach I."/>
            <person name="Chillingworth T."/>
            <person name="Clarke K."/>
            <person name="Cronin A."/>
            <person name="Davis P."/>
            <person name="Fraser A."/>
            <person name="Hance Z."/>
            <person name="Hauser H."/>
            <person name="Jagels K."/>
            <person name="Moule S."/>
            <person name="Mungall K."/>
            <person name="Norbertczak H."/>
            <person name="Rabbinowitsch E."/>
            <person name="Sanders M."/>
            <person name="Simmonds M."/>
            <person name="Whitehead S."/>
            <person name="Parkhill J."/>
        </authorList>
    </citation>
    <scope>NUCLEOTIDE SEQUENCE [LARGE SCALE GENOMIC DNA]</scope>
    <source>
        <strain>DSM 114642 / LMG 32736 / 3841</strain>
    </source>
</reference>
<gene>
    <name type="primary">atpF2</name>
    <name type="synonym">atpG</name>
    <name type="ordered locus">RL0927</name>
</gene>
<comment type="function">
    <text evidence="1">F(1)F(0) ATP synthase produces ATP from ADP in the presence of a proton or sodium gradient. F-type ATPases consist of two structural domains, F(1) containing the extramembraneous catalytic core and F(0) containing the membrane proton channel, linked together by a central stalk and a peripheral stalk. During catalysis, ATP synthesis in the catalytic domain of F(1) is coupled via a rotary mechanism of the central stalk subunits to proton translocation (By similarity).</text>
</comment>
<comment type="function">
    <text evidence="1">Component of the F(0) channel, it forms part of the peripheral stalk, linking F(1) to F(0). The b'-subunit is a diverged and duplicated form of b found in plants and photosynthetic bacteria (By similarity).</text>
</comment>
<comment type="subunit">
    <text evidence="1">F-type ATPases have 2 components, F(1) - the catalytic core - and F(0) - the membrane proton channel. F(1) has five subunits: alpha(3), beta(3), gamma(1), delta(1), epsilon(1). F(0) has three main subunits: a(1), b(2) and c(10-14). The alpha and beta chains form an alternating ring which encloses part of the gamma chain. F(1) is attached to F(0) by a central stalk formed by the gamma and epsilon chains, while a peripheral stalk is formed by the delta and b chains (By similarity).</text>
</comment>
<comment type="subcellular location">
    <subcellularLocation>
        <location evidence="1">Cell inner membrane</location>
        <topology evidence="1">Single-pass membrane protein</topology>
    </subcellularLocation>
</comment>
<comment type="similarity">
    <text evidence="3">Belongs to the ATPase B chain family.</text>
</comment>